<sequence>MAKIVKVIGREIIDSRGNPTVEAEVHLEGGFVGLAAAPSGASTGSREALELRDGDKSRFLGKGVLKAVAAVNNEIAQAIVGKDATNQAEIDQIMIDLDGTENKSNFGANAILAVSLANAKAAAASKGLPLYAYIAELNGTAGVYSMPLPMMNIINGGEHADNNVDIQEFMIQPVGAKTLREALRIGAEVFHNLAKVLKSKGMSTAVGDEGGFAPNLASNADALACIKEAVEKAGYVLGKDVTLAMDCASSEFYNKENGMYEMKGEGKSFTSQEFTHYLEELTKQYPIVSIEDGQDESDWEGFAYQTKVLGDRVQLVGDDLFVTNTKILKEGIEKGIANSILIKFNQIGSLTETLAAIKMAKDAGYTAVISHRSGETEDATIADLAVGTAAGQIKTGSMSRSDRIAKYNQLIRIEEALERAGTPAAFPGLKAVKGQA</sequence>
<proteinExistence type="inferred from homology"/>
<protein>
    <recommendedName>
        <fullName evidence="1">Enolase</fullName>
        <ecNumber evidence="1">4.2.1.11</ecNumber>
    </recommendedName>
    <alternativeName>
        <fullName evidence="1">2-phospho-D-glycerate hydro-lyase</fullName>
    </alternativeName>
    <alternativeName>
        <fullName evidence="1">2-phosphoglycerate dehydratase</fullName>
    </alternativeName>
</protein>
<keyword id="KW-0963">Cytoplasm</keyword>
<keyword id="KW-0324">Glycolysis</keyword>
<keyword id="KW-0456">Lyase</keyword>
<keyword id="KW-0460">Magnesium</keyword>
<keyword id="KW-0479">Metal-binding</keyword>
<keyword id="KW-0964">Secreted</keyword>
<evidence type="ECO:0000255" key="1">
    <source>
        <dbReference type="HAMAP-Rule" id="MF_00318"/>
    </source>
</evidence>
<dbReference type="EC" id="4.2.1.11" evidence="1"/>
<dbReference type="EMBL" id="CP000057">
    <property type="protein sequence ID" value="AAX87971.1"/>
    <property type="molecule type" value="Genomic_DNA"/>
</dbReference>
<dbReference type="RefSeq" id="WP_005655903.1">
    <property type="nucleotide sequence ID" value="NC_007146.2"/>
</dbReference>
<dbReference type="SMR" id="Q4QLX6"/>
<dbReference type="GeneID" id="93219970"/>
<dbReference type="KEGG" id="hit:NTHI1103"/>
<dbReference type="HOGENOM" id="CLU_031223_2_1_6"/>
<dbReference type="UniPathway" id="UPA00109">
    <property type="reaction ID" value="UER00187"/>
</dbReference>
<dbReference type="Proteomes" id="UP000002525">
    <property type="component" value="Chromosome"/>
</dbReference>
<dbReference type="GO" id="GO:0009986">
    <property type="term" value="C:cell surface"/>
    <property type="evidence" value="ECO:0007669"/>
    <property type="project" value="UniProtKB-SubCell"/>
</dbReference>
<dbReference type="GO" id="GO:0005576">
    <property type="term" value="C:extracellular region"/>
    <property type="evidence" value="ECO:0007669"/>
    <property type="project" value="UniProtKB-SubCell"/>
</dbReference>
<dbReference type="GO" id="GO:0000015">
    <property type="term" value="C:phosphopyruvate hydratase complex"/>
    <property type="evidence" value="ECO:0007669"/>
    <property type="project" value="InterPro"/>
</dbReference>
<dbReference type="GO" id="GO:0000287">
    <property type="term" value="F:magnesium ion binding"/>
    <property type="evidence" value="ECO:0007669"/>
    <property type="project" value="UniProtKB-UniRule"/>
</dbReference>
<dbReference type="GO" id="GO:0004634">
    <property type="term" value="F:phosphopyruvate hydratase activity"/>
    <property type="evidence" value="ECO:0007669"/>
    <property type="project" value="UniProtKB-UniRule"/>
</dbReference>
<dbReference type="GO" id="GO:0006096">
    <property type="term" value="P:glycolytic process"/>
    <property type="evidence" value="ECO:0007669"/>
    <property type="project" value="UniProtKB-UniRule"/>
</dbReference>
<dbReference type="CDD" id="cd03313">
    <property type="entry name" value="enolase"/>
    <property type="match status" value="1"/>
</dbReference>
<dbReference type="FunFam" id="3.20.20.120:FF:000001">
    <property type="entry name" value="Enolase"/>
    <property type="match status" value="1"/>
</dbReference>
<dbReference type="FunFam" id="3.30.390.10:FF:000001">
    <property type="entry name" value="Enolase"/>
    <property type="match status" value="1"/>
</dbReference>
<dbReference type="Gene3D" id="3.20.20.120">
    <property type="entry name" value="Enolase-like C-terminal domain"/>
    <property type="match status" value="1"/>
</dbReference>
<dbReference type="Gene3D" id="3.30.390.10">
    <property type="entry name" value="Enolase-like, N-terminal domain"/>
    <property type="match status" value="1"/>
</dbReference>
<dbReference type="HAMAP" id="MF_00318">
    <property type="entry name" value="Enolase"/>
    <property type="match status" value="1"/>
</dbReference>
<dbReference type="InterPro" id="IPR000941">
    <property type="entry name" value="Enolase"/>
</dbReference>
<dbReference type="InterPro" id="IPR036849">
    <property type="entry name" value="Enolase-like_C_sf"/>
</dbReference>
<dbReference type="InterPro" id="IPR029017">
    <property type="entry name" value="Enolase-like_N"/>
</dbReference>
<dbReference type="InterPro" id="IPR020810">
    <property type="entry name" value="Enolase_C"/>
</dbReference>
<dbReference type="InterPro" id="IPR020809">
    <property type="entry name" value="Enolase_CS"/>
</dbReference>
<dbReference type="InterPro" id="IPR020811">
    <property type="entry name" value="Enolase_N"/>
</dbReference>
<dbReference type="NCBIfam" id="TIGR01060">
    <property type="entry name" value="eno"/>
    <property type="match status" value="1"/>
</dbReference>
<dbReference type="PANTHER" id="PTHR11902">
    <property type="entry name" value="ENOLASE"/>
    <property type="match status" value="1"/>
</dbReference>
<dbReference type="PANTHER" id="PTHR11902:SF1">
    <property type="entry name" value="ENOLASE"/>
    <property type="match status" value="1"/>
</dbReference>
<dbReference type="Pfam" id="PF00113">
    <property type="entry name" value="Enolase_C"/>
    <property type="match status" value="1"/>
</dbReference>
<dbReference type="Pfam" id="PF03952">
    <property type="entry name" value="Enolase_N"/>
    <property type="match status" value="1"/>
</dbReference>
<dbReference type="PIRSF" id="PIRSF001400">
    <property type="entry name" value="Enolase"/>
    <property type="match status" value="1"/>
</dbReference>
<dbReference type="PRINTS" id="PR00148">
    <property type="entry name" value="ENOLASE"/>
</dbReference>
<dbReference type="SFLD" id="SFLDF00002">
    <property type="entry name" value="enolase"/>
    <property type="match status" value="1"/>
</dbReference>
<dbReference type="SFLD" id="SFLDG00178">
    <property type="entry name" value="enolase"/>
    <property type="match status" value="1"/>
</dbReference>
<dbReference type="SMART" id="SM01192">
    <property type="entry name" value="Enolase_C"/>
    <property type="match status" value="1"/>
</dbReference>
<dbReference type="SMART" id="SM01193">
    <property type="entry name" value="Enolase_N"/>
    <property type="match status" value="1"/>
</dbReference>
<dbReference type="SUPFAM" id="SSF51604">
    <property type="entry name" value="Enolase C-terminal domain-like"/>
    <property type="match status" value="1"/>
</dbReference>
<dbReference type="SUPFAM" id="SSF54826">
    <property type="entry name" value="Enolase N-terminal domain-like"/>
    <property type="match status" value="1"/>
</dbReference>
<dbReference type="PROSITE" id="PS00164">
    <property type="entry name" value="ENOLASE"/>
    <property type="match status" value="1"/>
</dbReference>
<name>ENO_HAEI8</name>
<gene>
    <name evidence="1" type="primary">eno</name>
    <name type="ordered locus">NTHI1103</name>
</gene>
<organism>
    <name type="scientific">Haemophilus influenzae (strain 86-028NP)</name>
    <dbReference type="NCBI Taxonomy" id="281310"/>
    <lineage>
        <taxon>Bacteria</taxon>
        <taxon>Pseudomonadati</taxon>
        <taxon>Pseudomonadota</taxon>
        <taxon>Gammaproteobacteria</taxon>
        <taxon>Pasteurellales</taxon>
        <taxon>Pasteurellaceae</taxon>
        <taxon>Haemophilus</taxon>
    </lineage>
</organism>
<reference key="1">
    <citation type="journal article" date="2005" name="J. Bacteriol.">
        <title>Genomic sequence of an otitis media isolate of nontypeable Haemophilus influenzae: comparative study with H. influenzae serotype d, strain KW20.</title>
        <authorList>
            <person name="Harrison A."/>
            <person name="Dyer D.W."/>
            <person name="Gillaspy A."/>
            <person name="Ray W.C."/>
            <person name="Mungur R."/>
            <person name="Carson M.B."/>
            <person name="Zhong H."/>
            <person name="Gipson J."/>
            <person name="Gipson M."/>
            <person name="Johnson L.S."/>
            <person name="Lewis L."/>
            <person name="Bakaletz L.O."/>
            <person name="Munson R.S. Jr."/>
        </authorList>
    </citation>
    <scope>NUCLEOTIDE SEQUENCE [LARGE SCALE GENOMIC DNA]</scope>
    <source>
        <strain>86-028NP</strain>
    </source>
</reference>
<comment type="function">
    <text evidence="1">Catalyzes the reversible conversion of 2-phosphoglycerate (2-PG) into phosphoenolpyruvate (PEP). It is essential for the degradation of carbohydrates via glycolysis.</text>
</comment>
<comment type="catalytic activity">
    <reaction evidence="1">
        <text>(2R)-2-phosphoglycerate = phosphoenolpyruvate + H2O</text>
        <dbReference type="Rhea" id="RHEA:10164"/>
        <dbReference type="ChEBI" id="CHEBI:15377"/>
        <dbReference type="ChEBI" id="CHEBI:58289"/>
        <dbReference type="ChEBI" id="CHEBI:58702"/>
        <dbReference type="EC" id="4.2.1.11"/>
    </reaction>
</comment>
<comment type="cofactor">
    <cofactor evidence="1">
        <name>Mg(2+)</name>
        <dbReference type="ChEBI" id="CHEBI:18420"/>
    </cofactor>
    <text evidence="1">Binds a second Mg(2+) ion via substrate during catalysis.</text>
</comment>
<comment type="pathway">
    <text evidence="1">Carbohydrate degradation; glycolysis; pyruvate from D-glyceraldehyde 3-phosphate: step 4/5.</text>
</comment>
<comment type="subunit">
    <text evidence="1">Component of the RNA degradosome, a multiprotein complex involved in RNA processing and mRNA degradation.</text>
</comment>
<comment type="subcellular location">
    <subcellularLocation>
        <location evidence="1">Cytoplasm</location>
    </subcellularLocation>
    <subcellularLocation>
        <location evidence="1">Secreted</location>
    </subcellularLocation>
    <subcellularLocation>
        <location evidence="1">Cell surface</location>
    </subcellularLocation>
    <text evidence="1">Fractions of enolase are present in both the cytoplasm and on the cell surface.</text>
</comment>
<comment type="similarity">
    <text evidence="1">Belongs to the enolase family.</text>
</comment>
<accession>Q4QLX6</accession>
<feature type="chain" id="PRO_0000267041" description="Enolase">
    <location>
        <begin position="1"/>
        <end position="436"/>
    </location>
</feature>
<feature type="active site" description="Proton donor" evidence="1">
    <location>
        <position position="209"/>
    </location>
</feature>
<feature type="active site" description="Proton acceptor" evidence="1">
    <location>
        <position position="343"/>
    </location>
</feature>
<feature type="binding site" evidence="1">
    <location>
        <position position="167"/>
    </location>
    <ligand>
        <name>(2R)-2-phosphoglycerate</name>
        <dbReference type="ChEBI" id="CHEBI:58289"/>
    </ligand>
</feature>
<feature type="binding site" evidence="1">
    <location>
        <position position="246"/>
    </location>
    <ligand>
        <name>Mg(2+)</name>
        <dbReference type="ChEBI" id="CHEBI:18420"/>
    </ligand>
</feature>
<feature type="binding site" evidence="1">
    <location>
        <position position="291"/>
    </location>
    <ligand>
        <name>Mg(2+)</name>
        <dbReference type="ChEBI" id="CHEBI:18420"/>
    </ligand>
</feature>
<feature type="binding site" evidence="1">
    <location>
        <position position="318"/>
    </location>
    <ligand>
        <name>Mg(2+)</name>
        <dbReference type="ChEBI" id="CHEBI:18420"/>
    </ligand>
</feature>
<feature type="binding site" evidence="1">
    <location>
        <position position="343"/>
    </location>
    <ligand>
        <name>(2R)-2-phosphoglycerate</name>
        <dbReference type="ChEBI" id="CHEBI:58289"/>
    </ligand>
</feature>
<feature type="binding site" evidence="1">
    <location>
        <position position="372"/>
    </location>
    <ligand>
        <name>(2R)-2-phosphoglycerate</name>
        <dbReference type="ChEBI" id="CHEBI:58289"/>
    </ligand>
</feature>
<feature type="binding site" evidence="1">
    <location>
        <position position="373"/>
    </location>
    <ligand>
        <name>(2R)-2-phosphoglycerate</name>
        <dbReference type="ChEBI" id="CHEBI:58289"/>
    </ligand>
</feature>
<feature type="binding site" evidence="1">
    <location>
        <position position="394"/>
    </location>
    <ligand>
        <name>(2R)-2-phosphoglycerate</name>
        <dbReference type="ChEBI" id="CHEBI:58289"/>
    </ligand>
</feature>